<accession>Q5M243</accession>
<proteinExistence type="evidence at protein level"/>
<protein>
    <recommendedName>
        <fullName evidence="2">Energy-coupling factor transporter ATP-binding protein EcfA1</fullName>
        <shortName evidence="2">ECF transporter A component EcfA1</shortName>
        <ecNumber evidence="2">7.-.-.-</ecNumber>
    </recommendedName>
</protein>
<feature type="chain" id="PRO_0000288010" description="Energy-coupling factor transporter ATP-binding protein EcfA1">
    <location>
        <begin position="1"/>
        <end position="276"/>
    </location>
</feature>
<feature type="domain" description="ABC transporter" evidence="2">
    <location>
        <begin position="2"/>
        <end position="237"/>
    </location>
</feature>
<feature type="active site" description="Proton acceptor" evidence="1">
    <location>
        <position position="163"/>
    </location>
</feature>
<feature type="binding site" evidence="2">
    <location>
        <begin position="37"/>
        <end position="44"/>
    </location>
    <ligand>
        <name>ATP</name>
        <dbReference type="ChEBI" id="CHEBI:30616"/>
    </ligand>
</feature>
<feature type="mutagenesis site" description="No effect on ATPase, 10-fold decrease in riboflavin uptake; when associated with A-97 in EcfA2." evidence="3">
    <original>Q</original>
    <variation>A</variation>
    <location>
        <position position="90"/>
    </location>
</feature>
<feature type="mutagenesis site" description="10-fold decrease in ATPase and riboflavin uptake; when associated with Q-171 in EcfA2." evidence="3">
    <original>E</original>
    <variation>Q</variation>
    <location>
        <position position="163"/>
    </location>
</feature>
<name>ECFA1_STRT2</name>
<sequence length="276" mass="30946">MIEIKNLKFKYNQDQTSYTLNDVSFHVKHGEWLSIVGHNGSGKSTTARLIGGLLVADSGQIIVDGQELTEETVWDIRDKIGMVFQNPDNQFVGATVEDDVAFGLENKGLPYKEMVSRVQEALSFVGMMDFKDREPARLSGGQKQRVAIAGIIAMRPSILILDEATSMLDPEGRQELIQYIEDIRQQYGMTVLSITHDLDEVAMSNRVLVLKQGKVESISSPRELFSRGSELVDLGLDIPFSALLTQKLKNQGLIDCEGYLTEKELVEQLWEYLSKM</sequence>
<dbReference type="EC" id="7.-.-.-" evidence="2"/>
<dbReference type="EMBL" id="CP000023">
    <property type="protein sequence ID" value="AAV61603.1"/>
    <property type="molecule type" value="Genomic_DNA"/>
</dbReference>
<dbReference type="RefSeq" id="WP_002947776.1">
    <property type="nucleotide sequence ID" value="NC_006448.1"/>
</dbReference>
<dbReference type="SMR" id="Q5M243"/>
<dbReference type="STRING" id="264199.stu2009"/>
<dbReference type="TCDB" id="3.A.1.25.6">
    <property type="family name" value="the atp-binding cassette (abc) superfamily"/>
</dbReference>
<dbReference type="KEGG" id="stl:stu2009"/>
<dbReference type="eggNOG" id="COG1122">
    <property type="taxonomic scope" value="Bacteria"/>
</dbReference>
<dbReference type="HOGENOM" id="CLU_000604_1_22_9"/>
<dbReference type="Proteomes" id="UP000001170">
    <property type="component" value="Chromosome"/>
</dbReference>
<dbReference type="GO" id="GO:0043190">
    <property type="term" value="C:ATP-binding cassette (ABC) transporter complex"/>
    <property type="evidence" value="ECO:0007669"/>
    <property type="project" value="TreeGrafter"/>
</dbReference>
<dbReference type="GO" id="GO:0005886">
    <property type="term" value="C:plasma membrane"/>
    <property type="evidence" value="ECO:0000314"/>
    <property type="project" value="UniProtKB"/>
</dbReference>
<dbReference type="GO" id="GO:0005524">
    <property type="term" value="F:ATP binding"/>
    <property type="evidence" value="ECO:0007669"/>
    <property type="project" value="UniProtKB-KW"/>
</dbReference>
<dbReference type="GO" id="GO:0016887">
    <property type="term" value="F:ATP hydrolysis activity"/>
    <property type="evidence" value="ECO:0007669"/>
    <property type="project" value="InterPro"/>
</dbReference>
<dbReference type="GO" id="GO:0042626">
    <property type="term" value="F:ATPase-coupled transmembrane transporter activity"/>
    <property type="evidence" value="ECO:0007669"/>
    <property type="project" value="TreeGrafter"/>
</dbReference>
<dbReference type="GO" id="GO:0032217">
    <property type="term" value="F:riboflavin transmembrane transporter activity"/>
    <property type="evidence" value="ECO:0000315"/>
    <property type="project" value="UniProtKB"/>
</dbReference>
<dbReference type="GO" id="GO:0032218">
    <property type="term" value="P:riboflavin transport"/>
    <property type="evidence" value="ECO:0000315"/>
    <property type="project" value="UniProtKB"/>
</dbReference>
<dbReference type="CDD" id="cd03225">
    <property type="entry name" value="ABC_cobalt_CbiO_domain1"/>
    <property type="match status" value="1"/>
</dbReference>
<dbReference type="FunFam" id="3.40.50.300:FF:000224">
    <property type="entry name" value="Energy-coupling factor transporter ATP-binding protein EcfA"/>
    <property type="match status" value="1"/>
</dbReference>
<dbReference type="Gene3D" id="3.40.50.300">
    <property type="entry name" value="P-loop containing nucleotide triphosphate hydrolases"/>
    <property type="match status" value="1"/>
</dbReference>
<dbReference type="InterPro" id="IPR003593">
    <property type="entry name" value="AAA+_ATPase"/>
</dbReference>
<dbReference type="InterPro" id="IPR003439">
    <property type="entry name" value="ABC_transporter-like_ATP-bd"/>
</dbReference>
<dbReference type="InterPro" id="IPR017871">
    <property type="entry name" value="ABC_transporter-like_CS"/>
</dbReference>
<dbReference type="InterPro" id="IPR015856">
    <property type="entry name" value="ABC_transpr_CbiO/EcfA_su"/>
</dbReference>
<dbReference type="InterPro" id="IPR050095">
    <property type="entry name" value="ECF_ABC_transporter_ATP-bd"/>
</dbReference>
<dbReference type="InterPro" id="IPR030947">
    <property type="entry name" value="EcfA_1"/>
</dbReference>
<dbReference type="InterPro" id="IPR027417">
    <property type="entry name" value="P-loop_NTPase"/>
</dbReference>
<dbReference type="NCBIfam" id="TIGR04520">
    <property type="entry name" value="ECF_ATPase_1"/>
    <property type="match status" value="1"/>
</dbReference>
<dbReference type="NCBIfam" id="NF010156">
    <property type="entry name" value="PRK13635.1"/>
    <property type="match status" value="1"/>
</dbReference>
<dbReference type="NCBIfam" id="NF010167">
    <property type="entry name" value="PRK13648.1"/>
    <property type="match status" value="1"/>
</dbReference>
<dbReference type="PANTHER" id="PTHR43553:SF24">
    <property type="entry name" value="ENERGY-COUPLING FACTOR TRANSPORTER ATP-BINDING PROTEIN ECFA1"/>
    <property type="match status" value="1"/>
</dbReference>
<dbReference type="PANTHER" id="PTHR43553">
    <property type="entry name" value="HEAVY METAL TRANSPORTER"/>
    <property type="match status" value="1"/>
</dbReference>
<dbReference type="Pfam" id="PF00005">
    <property type="entry name" value="ABC_tran"/>
    <property type="match status" value="1"/>
</dbReference>
<dbReference type="SMART" id="SM00382">
    <property type="entry name" value="AAA"/>
    <property type="match status" value="1"/>
</dbReference>
<dbReference type="SUPFAM" id="SSF52540">
    <property type="entry name" value="P-loop containing nucleoside triphosphate hydrolases"/>
    <property type="match status" value="1"/>
</dbReference>
<dbReference type="PROSITE" id="PS00211">
    <property type="entry name" value="ABC_TRANSPORTER_1"/>
    <property type="match status" value="1"/>
</dbReference>
<dbReference type="PROSITE" id="PS50893">
    <property type="entry name" value="ABC_TRANSPORTER_2"/>
    <property type="match status" value="1"/>
</dbReference>
<dbReference type="PROSITE" id="PS51246">
    <property type="entry name" value="CBIO"/>
    <property type="match status" value="1"/>
</dbReference>
<organism>
    <name type="scientific">Streptococcus thermophilus (strain ATCC BAA-250 / LMG 18311)</name>
    <dbReference type="NCBI Taxonomy" id="264199"/>
    <lineage>
        <taxon>Bacteria</taxon>
        <taxon>Bacillati</taxon>
        <taxon>Bacillota</taxon>
        <taxon>Bacilli</taxon>
        <taxon>Lactobacillales</taxon>
        <taxon>Streptococcaceae</taxon>
        <taxon>Streptococcus</taxon>
    </lineage>
</organism>
<evidence type="ECO:0000255" key="1"/>
<evidence type="ECO:0000255" key="2">
    <source>
        <dbReference type="HAMAP-Rule" id="MF_01710"/>
    </source>
</evidence>
<evidence type="ECO:0000269" key="3">
    <source>
    </source>
</evidence>
<evidence type="ECO:0000305" key="4">
    <source>
    </source>
</evidence>
<comment type="function">
    <text evidence="2 3">ATP-binding (A) component of a common energy-coupling factor (ECF) ABC-transporter complex. Unlike classic ABC transporters this ECF transporter provides the energy necessary to transport a number of different substrates (By similarity). Expression of the complex plus RibU in de-energized E.coli allows riboflavin uptake.</text>
</comment>
<comment type="subunit">
    <text evidence="2 3">Forms a stable energy-coupling factor (ECF) transporter complex composed of 2 membrane-embedded substrate-binding proteins (S component), 2 ATP-binding proteins (A component) and 2 transmembrane proteins (T component) upon coexpression of the components in E.coli. May be able to interact with more than 1 S component at a time.</text>
</comment>
<comment type="subcellular location">
    <subcellularLocation>
        <location evidence="4">Cell membrane</location>
        <topology evidence="4">Peripheral membrane protein</topology>
    </subcellularLocation>
</comment>
<comment type="similarity">
    <text evidence="2">Belongs to the ABC transporter superfamily. Energy-coupling factor EcfA family.</text>
</comment>
<gene>
    <name evidence="2" type="primary">ecfA1</name>
    <name type="synonym">cbiO1</name>
    <name type="ordered locus">stu2009</name>
</gene>
<reference key="1">
    <citation type="journal article" date="2004" name="Nat. Biotechnol.">
        <title>Complete sequence and comparative genome analysis of the dairy bacterium Streptococcus thermophilus.</title>
        <authorList>
            <person name="Bolotin A."/>
            <person name="Quinquis B."/>
            <person name="Renault P."/>
            <person name="Sorokin A."/>
            <person name="Ehrlich S.D."/>
            <person name="Kulakauskas S."/>
            <person name="Lapidus A."/>
            <person name="Goltsman E."/>
            <person name="Mazur M."/>
            <person name="Pusch G.D."/>
            <person name="Fonstein M."/>
            <person name="Overbeek R."/>
            <person name="Kyprides N."/>
            <person name="Purnelle B."/>
            <person name="Prozzi D."/>
            <person name="Ngui K."/>
            <person name="Masuy D."/>
            <person name="Hancy F."/>
            <person name="Burteau S."/>
            <person name="Boutry M."/>
            <person name="Delcour J."/>
            <person name="Goffeau A."/>
            <person name="Hols P."/>
        </authorList>
    </citation>
    <scope>NUCLEOTIDE SEQUENCE [LARGE SCALE GENOMIC DNA]</scope>
    <source>
        <strain>ATCC BAA-250 / LMG 18311</strain>
    </source>
</reference>
<reference key="2">
    <citation type="journal article" date="2013" name="Proc. Natl. Acad. Sci. U.S.A.">
        <title>Assembly and mechanism of a group II ECF transporter.</title>
        <authorList>
            <person name="Karpowich N.K."/>
            <person name="Wang D.N."/>
        </authorList>
    </citation>
    <scope>FUNCTION AS A TRANSPORT COMPONENT</scope>
    <scope>SUBUNIT</scope>
    <scope>SUBCELLULAR LOCATION</scope>
    <scope>EXPRESSION IN E.COLI</scope>
    <scope>MUTAGENESIS OF GLN-90 AND GLU-163</scope>
    <source>
        <strain>ATCC BAA-250 / LMG 18311</strain>
    </source>
</reference>
<keyword id="KW-0067">ATP-binding</keyword>
<keyword id="KW-1003">Cell membrane</keyword>
<keyword id="KW-0472">Membrane</keyword>
<keyword id="KW-0547">Nucleotide-binding</keyword>
<keyword id="KW-1185">Reference proteome</keyword>
<keyword id="KW-1278">Translocase</keyword>
<keyword id="KW-0813">Transport</keyword>